<comment type="function">
    <text evidence="1">Plays an essential role in the initiation and regulation of chromosomal replication. ATP-DnaA binds to the origin of replication (oriC) to initiate formation of the DNA replication initiation complex once per cell cycle. Binds the DnaA box (a 9 base pair repeat at the origin) and separates the double-stranded (ds)DNA. Forms a right-handed helical filament on oriC DNA; dsDNA binds to the exterior of the filament while single-stranded (ss)DNA is stabiized in the filament's interior. The ATP-DnaA-oriC complex binds and stabilizes one strand of the AT-rich DNA unwinding element (DUE), permitting loading of DNA polymerase. After initiation quickly degrades to an ADP-DnaA complex that is not apt for DNA replication. Binds acidic phospholipids.</text>
</comment>
<comment type="subunit">
    <text evidence="1">Oligomerizes as a right-handed, spiral filament on DNA at oriC.</text>
</comment>
<comment type="subcellular location">
    <subcellularLocation>
        <location evidence="1">Cytoplasm</location>
    </subcellularLocation>
</comment>
<comment type="domain">
    <text evidence="1">Domain I is involved in oligomerization and binding regulators, domain II is flexibile and of varying length in different bacteria, domain III forms the AAA+ region, while domain IV binds dsDNA.</text>
</comment>
<comment type="similarity">
    <text evidence="1">Belongs to the DnaA family.</text>
</comment>
<dbReference type="EMBL" id="CR936503">
    <property type="protein sequence ID" value="CAI54303.1"/>
    <property type="molecule type" value="Genomic_DNA"/>
</dbReference>
<dbReference type="RefSeq" id="WP_011373719.1">
    <property type="nucleotide sequence ID" value="NC_007576.1"/>
</dbReference>
<dbReference type="SMR" id="Q38ZS4"/>
<dbReference type="STRING" id="314315.LCA_0001"/>
<dbReference type="GeneID" id="57132822"/>
<dbReference type="KEGG" id="lsa:LCA_0001"/>
<dbReference type="eggNOG" id="COG0593">
    <property type="taxonomic scope" value="Bacteria"/>
</dbReference>
<dbReference type="HOGENOM" id="CLU_026910_3_1_9"/>
<dbReference type="OrthoDB" id="9807019at2"/>
<dbReference type="Proteomes" id="UP000002707">
    <property type="component" value="Chromosome"/>
</dbReference>
<dbReference type="GO" id="GO:0005737">
    <property type="term" value="C:cytoplasm"/>
    <property type="evidence" value="ECO:0007669"/>
    <property type="project" value="UniProtKB-SubCell"/>
</dbReference>
<dbReference type="GO" id="GO:0005886">
    <property type="term" value="C:plasma membrane"/>
    <property type="evidence" value="ECO:0007669"/>
    <property type="project" value="TreeGrafter"/>
</dbReference>
<dbReference type="GO" id="GO:0005524">
    <property type="term" value="F:ATP binding"/>
    <property type="evidence" value="ECO:0007669"/>
    <property type="project" value="UniProtKB-UniRule"/>
</dbReference>
<dbReference type="GO" id="GO:0016887">
    <property type="term" value="F:ATP hydrolysis activity"/>
    <property type="evidence" value="ECO:0007669"/>
    <property type="project" value="InterPro"/>
</dbReference>
<dbReference type="GO" id="GO:0003688">
    <property type="term" value="F:DNA replication origin binding"/>
    <property type="evidence" value="ECO:0007669"/>
    <property type="project" value="UniProtKB-UniRule"/>
</dbReference>
<dbReference type="GO" id="GO:0008289">
    <property type="term" value="F:lipid binding"/>
    <property type="evidence" value="ECO:0007669"/>
    <property type="project" value="UniProtKB-KW"/>
</dbReference>
<dbReference type="GO" id="GO:0006270">
    <property type="term" value="P:DNA replication initiation"/>
    <property type="evidence" value="ECO:0007669"/>
    <property type="project" value="UniProtKB-UniRule"/>
</dbReference>
<dbReference type="GO" id="GO:0006275">
    <property type="term" value="P:regulation of DNA replication"/>
    <property type="evidence" value="ECO:0007669"/>
    <property type="project" value="UniProtKB-UniRule"/>
</dbReference>
<dbReference type="CDD" id="cd00009">
    <property type="entry name" value="AAA"/>
    <property type="match status" value="1"/>
</dbReference>
<dbReference type="CDD" id="cd06571">
    <property type="entry name" value="Bac_DnaA_C"/>
    <property type="match status" value="1"/>
</dbReference>
<dbReference type="FunFam" id="1.10.1750.10:FF:000002">
    <property type="entry name" value="Chromosomal replication initiator protein DnaA"/>
    <property type="match status" value="1"/>
</dbReference>
<dbReference type="FunFam" id="1.10.8.60:FF:000003">
    <property type="entry name" value="Chromosomal replication initiator protein DnaA"/>
    <property type="match status" value="1"/>
</dbReference>
<dbReference type="FunFam" id="3.40.50.300:FF:000668">
    <property type="entry name" value="Chromosomal replication initiator protein DnaA"/>
    <property type="match status" value="1"/>
</dbReference>
<dbReference type="Gene3D" id="1.10.1750.10">
    <property type="match status" value="1"/>
</dbReference>
<dbReference type="Gene3D" id="1.10.8.60">
    <property type="match status" value="1"/>
</dbReference>
<dbReference type="Gene3D" id="3.30.300.180">
    <property type="match status" value="1"/>
</dbReference>
<dbReference type="Gene3D" id="3.40.50.300">
    <property type="entry name" value="P-loop containing nucleotide triphosphate hydrolases"/>
    <property type="match status" value="1"/>
</dbReference>
<dbReference type="HAMAP" id="MF_00377">
    <property type="entry name" value="DnaA_bact"/>
    <property type="match status" value="1"/>
</dbReference>
<dbReference type="InterPro" id="IPR003593">
    <property type="entry name" value="AAA+_ATPase"/>
</dbReference>
<dbReference type="InterPro" id="IPR001957">
    <property type="entry name" value="Chromosome_initiator_DnaA"/>
</dbReference>
<dbReference type="InterPro" id="IPR020591">
    <property type="entry name" value="Chromosome_initiator_DnaA-like"/>
</dbReference>
<dbReference type="InterPro" id="IPR018312">
    <property type="entry name" value="Chromosome_initiator_DnaA_CS"/>
</dbReference>
<dbReference type="InterPro" id="IPR013159">
    <property type="entry name" value="DnaA_C"/>
</dbReference>
<dbReference type="InterPro" id="IPR013317">
    <property type="entry name" value="DnaA_dom"/>
</dbReference>
<dbReference type="InterPro" id="IPR024633">
    <property type="entry name" value="DnaA_N_dom"/>
</dbReference>
<dbReference type="InterPro" id="IPR038454">
    <property type="entry name" value="DnaA_N_sf"/>
</dbReference>
<dbReference type="InterPro" id="IPR027417">
    <property type="entry name" value="P-loop_NTPase"/>
</dbReference>
<dbReference type="InterPro" id="IPR010921">
    <property type="entry name" value="Trp_repressor/repl_initiator"/>
</dbReference>
<dbReference type="NCBIfam" id="TIGR00362">
    <property type="entry name" value="DnaA"/>
    <property type="match status" value="1"/>
</dbReference>
<dbReference type="PANTHER" id="PTHR30050">
    <property type="entry name" value="CHROMOSOMAL REPLICATION INITIATOR PROTEIN DNAA"/>
    <property type="match status" value="1"/>
</dbReference>
<dbReference type="PANTHER" id="PTHR30050:SF2">
    <property type="entry name" value="CHROMOSOMAL REPLICATION INITIATOR PROTEIN DNAA"/>
    <property type="match status" value="1"/>
</dbReference>
<dbReference type="Pfam" id="PF00308">
    <property type="entry name" value="Bac_DnaA"/>
    <property type="match status" value="1"/>
</dbReference>
<dbReference type="Pfam" id="PF08299">
    <property type="entry name" value="Bac_DnaA_C"/>
    <property type="match status" value="1"/>
</dbReference>
<dbReference type="Pfam" id="PF11638">
    <property type="entry name" value="DnaA_N"/>
    <property type="match status" value="1"/>
</dbReference>
<dbReference type="PRINTS" id="PR00051">
    <property type="entry name" value="DNAA"/>
</dbReference>
<dbReference type="SMART" id="SM00382">
    <property type="entry name" value="AAA"/>
    <property type="match status" value="1"/>
</dbReference>
<dbReference type="SMART" id="SM00760">
    <property type="entry name" value="Bac_DnaA_C"/>
    <property type="match status" value="1"/>
</dbReference>
<dbReference type="SUPFAM" id="SSF52540">
    <property type="entry name" value="P-loop containing nucleoside triphosphate hydrolases"/>
    <property type="match status" value="1"/>
</dbReference>
<dbReference type="SUPFAM" id="SSF48295">
    <property type="entry name" value="TrpR-like"/>
    <property type="match status" value="1"/>
</dbReference>
<dbReference type="PROSITE" id="PS01008">
    <property type="entry name" value="DNAA"/>
    <property type="match status" value="1"/>
</dbReference>
<keyword id="KW-0067">ATP-binding</keyword>
<keyword id="KW-0963">Cytoplasm</keyword>
<keyword id="KW-0235">DNA replication</keyword>
<keyword id="KW-0238">DNA-binding</keyword>
<keyword id="KW-0446">Lipid-binding</keyword>
<keyword id="KW-0547">Nucleotide-binding</keyword>
<keyword id="KW-1185">Reference proteome</keyword>
<protein>
    <recommendedName>
        <fullName evidence="1">Chromosomal replication initiator protein DnaA</fullName>
    </recommendedName>
</protein>
<organism>
    <name type="scientific">Latilactobacillus sakei subsp. sakei (strain 23K)</name>
    <name type="common">Lactobacillus sakei subsp. sakei</name>
    <dbReference type="NCBI Taxonomy" id="314315"/>
    <lineage>
        <taxon>Bacteria</taxon>
        <taxon>Bacillati</taxon>
        <taxon>Bacillota</taxon>
        <taxon>Bacilli</taxon>
        <taxon>Lactobacillales</taxon>
        <taxon>Lactobacillaceae</taxon>
        <taxon>Latilactobacillus</taxon>
    </lineage>
</organism>
<proteinExistence type="inferred from homology"/>
<evidence type="ECO:0000255" key="1">
    <source>
        <dbReference type="HAMAP-Rule" id="MF_00377"/>
    </source>
</evidence>
<name>DNAA_LATSS</name>
<gene>
    <name evidence="1" type="primary">dnaA</name>
    <name type="ordered locus">LCA_0001</name>
</gene>
<accession>Q38ZS4</accession>
<feature type="chain" id="PRO_1000048665" description="Chromosomal replication initiator protein DnaA">
    <location>
        <begin position="1"/>
        <end position="448"/>
    </location>
</feature>
<feature type="region of interest" description="Domain I, interacts with DnaA modulators" evidence="1">
    <location>
        <begin position="1"/>
        <end position="72"/>
    </location>
</feature>
<feature type="region of interest" description="Domain II" evidence="1">
    <location>
        <begin position="72"/>
        <end position="110"/>
    </location>
</feature>
<feature type="region of interest" description="Domain III, AAA+ region" evidence="1">
    <location>
        <begin position="111"/>
        <end position="327"/>
    </location>
</feature>
<feature type="region of interest" description="Domain IV, binds dsDNA" evidence="1">
    <location>
        <begin position="328"/>
        <end position="448"/>
    </location>
</feature>
<feature type="binding site" evidence="1">
    <location>
        <position position="155"/>
    </location>
    <ligand>
        <name>ATP</name>
        <dbReference type="ChEBI" id="CHEBI:30616"/>
    </ligand>
</feature>
<feature type="binding site" evidence="1">
    <location>
        <position position="157"/>
    </location>
    <ligand>
        <name>ATP</name>
        <dbReference type="ChEBI" id="CHEBI:30616"/>
    </ligand>
</feature>
<feature type="binding site" evidence="1">
    <location>
        <position position="158"/>
    </location>
    <ligand>
        <name>ATP</name>
        <dbReference type="ChEBI" id="CHEBI:30616"/>
    </ligand>
</feature>
<feature type="binding site" evidence="1">
    <location>
        <position position="159"/>
    </location>
    <ligand>
        <name>ATP</name>
        <dbReference type="ChEBI" id="CHEBI:30616"/>
    </ligand>
</feature>
<sequence length="448" mass="50675">MPDLQELWNYLQEKFQTDLTTVGFNAWIKTAKPLAFRANELLIEVPSVLHKEYWENNLATKVVEGAYEFAEIELTPIFVLPGESDNLTPLEPEEEHVLTKAETPTFLRETHLNSKYTFDTFVTGKGNQMAHAAALVVSEEPGVLYNPLFLYGGVGLGKTHLMQAIGHQLLESKPETNVKYVTSEAFANDFINSIQTKNQEKFRQEYRNVDLLLVDDIQFFADKEGTQEEFFHTFNDLYNDKKQIVLTSDRLPNEIPKLQERLVSRFKWGLPVDITPPDLETRIAILRNKADAEHLEIPEDTLSYIAGQIDSNVRELEGALVRVQAYATMQNAEITTSLAADALKGLKLNGKSSQLSIAKIQSVVAKYYSLTVADLKGRKRVKEIVLPRQIAMYLAREMTDSSLPKIGQEFGGKDHTTVMHAHERISQSLTTDQNLKDAILDLKNTMKS</sequence>
<reference key="1">
    <citation type="journal article" date="2005" name="Nat. Biotechnol.">
        <title>The complete genome sequence of the meat-borne lactic acid bacterium Lactobacillus sakei 23K.</title>
        <authorList>
            <person name="Chaillou S."/>
            <person name="Champomier-Verges M.-C."/>
            <person name="Cornet M."/>
            <person name="Crutz-Le Coq A.-M."/>
            <person name="Dudez A.-M."/>
            <person name="Martin V."/>
            <person name="Beaufils S."/>
            <person name="Darbon-Rongere E."/>
            <person name="Bossy R."/>
            <person name="Loux V."/>
            <person name="Zagorec M."/>
        </authorList>
    </citation>
    <scope>NUCLEOTIDE SEQUENCE [LARGE SCALE GENOMIC DNA]</scope>
    <source>
        <strain>23K</strain>
    </source>
</reference>